<comment type="function">
    <text evidence="1">Tyrosine-protein phosphatase which dephosphorylates CTNNB1. May function in cell proliferation and migration and play a role in the maintenance of epithelial integrity (By similarity).</text>
</comment>
<comment type="catalytic activity">
    <reaction evidence="7">
        <text>O-phospho-L-tyrosyl-[protein] + H2O = L-tyrosyl-[protein] + phosphate</text>
        <dbReference type="Rhea" id="RHEA:10684"/>
        <dbReference type="Rhea" id="RHEA-COMP:10136"/>
        <dbReference type="Rhea" id="RHEA-COMP:20101"/>
        <dbReference type="ChEBI" id="CHEBI:15377"/>
        <dbReference type="ChEBI" id="CHEBI:43474"/>
        <dbReference type="ChEBI" id="CHEBI:46858"/>
        <dbReference type="ChEBI" id="CHEBI:61978"/>
        <dbReference type="EC" id="3.1.3.48"/>
    </reaction>
</comment>
<comment type="subcellular location">
    <subcellularLocation>
        <location evidence="1">Cell junction</location>
    </subcellularLocation>
    <subcellularLocation>
        <location evidence="1">Cell membrane</location>
        <topology evidence="1">Single-pass type I membrane protein</topology>
    </subcellularLocation>
</comment>
<comment type="developmental stage">
    <text evidence="9">First observed at HH4 in mesodermal progenitor cells surrounding the area of Hensen node and in the primitive streak. Expressed in the presomitic mesoderm and dynamically expressed in forming somites. Detected in the developing intermediate mesoderm at HH9 and in the mesonephric tubules and ducts by stage HH18. Expressed in the developing nervous system. Also observed in the limb bud and the developing heart.</text>
</comment>
<comment type="similarity">
    <text evidence="10">Belongs to the protein-tyrosine phosphatase family. Receptor class 2B subfamily.</text>
</comment>
<comment type="sequence caution" evidence="10">
    <conflict type="miscellaneous discrepancy">
        <sequence resource="EMBL-CDS" id="AAA49016"/>
    </conflict>
    <text>Contaminating sequence. Sequence of unknown origin.</text>
</comment>
<organism>
    <name type="scientific">Gallus gallus</name>
    <name type="common">Chicken</name>
    <dbReference type="NCBI Taxonomy" id="9031"/>
    <lineage>
        <taxon>Eukaryota</taxon>
        <taxon>Metazoa</taxon>
        <taxon>Chordata</taxon>
        <taxon>Craniata</taxon>
        <taxon>Vertebrata</taxon>
        <taxon>Euteleostomi</taxon>
        <taxon>Archelosauria</taxon>
        <taxon>Archosauria</taxon>
        <taxon>Dinosauria</taxon>
        <taxon>Saurischia</taxon>
        <taxon>Theropoda</taxon>
        <taxon>Coelurosauria</taxon>
        <taxon>Aves</taxon>
        <taxon>Neognathae</taxon>
        <taxon>Galloanserae</taxon>
        <taxon>Galliformes</taxon>
        <taxon>Phasianidae</taxon>
        <taxon>Phasianinae</taxon>
        <taxon>Gallus</taxon>
    </lineage>
</organism>
<accession>Q6YI48</accession>
<accession>Q90948</accession>
<gene>
    <name type="primary">PTPRU</name>
    <name type="synonym">RPTPPSI</name>
</gene>
<evidence type="ECO:0000250" key="1"/>
<evidence type="ECO:0000255" key="2"/>
<evidence type="ECO:0000255" key="3">
    <source>
        <dbReference type="PROSITE-ProRule" id="PRU00114"/>
    </source>
</evidence>
<evidence type="ECO:0000255" key="4">
    <source>
        <dbReference type="PROSITE-ProRule" id="PRU00128"/>
    </source>
</evidence>
<evidence type="ECO:0000255" key="5">
    <source>
        <dbReference type="PROSITE-ProRule" id="PRU00160"/>
    </source>
</evidence>
<evidence type="ECO:0000255" key="6">
    <source>
        <dbReference type="PROSITE-ProRule" id="PRU00316"/>
    </source>
</evidence>
<evidence type="ECO:0000255" key="7">
    <source>
        <dbReference type="PROSITE-ProRule" id="PRU10044"/>
    </source>
</evidence>
<evidence type="ECO:0000256" key="8">
    <source>
        <dbReference type="SAM" id="MobiDB-lite"/>
    </source>
</evidence>
<evidence type="ECO:0000269" key="9">
    <source>
    </source>
</evidence>
<evidence type="ECO:0000305" key="10"/>
<protein>
    <recommendedName>
        <fullName>Receptor-type tyrosine-protein phosphatase U</fullName>
        <shortName>R-PTP-U</shortName>
        <ecNumber>3.1.3.48</ecNumber>
    </recommendedName>
    <alternativeName>
        <fullName>Receptor-type protein-tyrosine phosphatase psi</fullName>
        <shortName>R-PTP-psi</shortName>
        <shortName>cRPTPPSI</shortName>
    </alternativeName>
</protein>
<sequence length="1434" mass="161679">MRSARALLLALALRVCALDSETPSAGCTFEEDDDLNQCEYSQGEDDDFGWELVRSYMMPHLTADLPHGSYLMVNASQHAAGQRAHLLFQALSENDTHCLQFSYFMYSRDGHSPGTLSAYVRVMGGPVGSAVWNASGSHGRQWHQAELAVSLFWPSEYQVLFEAVISSERRGYLGLDDILLLNYPCSKAPHFSRLGDVEVNAGQNATFQCVAAGKAAEAERFLMQRQSGEVVPAASVKHISHRRFLATFQLDEVSKGEQDLYRCVTQSSRGSGVSNFAELIVKEPPTPIAPPQLLRAGSTYLIIQLNTNSIIGDGPIVRKEIEYRMTSGPWSEVHAVNMQTYKLWHLDPDTEYEISVLLTRPGEGGTGKPGPPLISRTKCAEPMRAPKGLAFSEIQSRQLTLQWEPLGYNLTRCHTYSVSLCYRYLVGSGLNQTFRECAKMERNANRYTIKNLLPYRNIHVKLILSNPEGRKEGKEVTFQTDEDVPGGIASESLTFTPLEDMIFLKWEEPVEPNGLITQYEISYQSIESSDPAVNVPGPRRTVSKLRNETYHVFSNLHPGTTYLFSVRARTGKGFGQTALTEITTNISAPTFDYGDMPSPLGESESTITVLLRPAQGRGAPISTYQVIVEEDRPKRIKRELGGQECFPVPLTFDDAMSRGSVHYFGAELPASSLTEAKPFTVGDNQTYSGYWNPPLEPKKAYLIYFQAMSNLKGETRLNCIRIARKAACKESKRPLEVSQHSEEMGLILGICAGGLVVLIILLGAIIVVIRKGKPVNMTKATINYRHEKTHMMSAIDRSFTDQSTLQEDERLGLSFMDTHNYSNRGDQRSSVVNESSSLLGGSPRRQCGRKGSPYHTGQLHPAVRVADLLQHINQMKTAEGYGFKQEYESFFEGWDASKKKDKTKGRQDHVSTYDRHRVKLHPLLGDPNSDYINANYIDGYHRSNHFIATQGPKQEMVYDFWRMVWQEHCSSIVMITKLVEVGRVKCSKYWPDDSEMYGDIKITLVKSEMLAEYAVRTFALERRGYSARHEVKQFHFTSWPEHGVPYHATGLLAFIRRVKASTPPDAGPIVIHCSAGTGRTGCYIVLDVMLDMAECEGVVDIYNCVKTLCSRRINMIQTEEQYIFIHDAILEACLCGETSIPASEFKPTYKEMVRIEPQSNSSQLREEFQTLNSVTPHLDVEECSIALLPRNRERNRSMDVLPPDRCLPFLISVDGDSNNYINAALTDSYTKSAAFIVTLHPLQNTTTDFWRLVYDYGCTSIVMLNQLNQSNSAWPCLQYWPEPGLQHYGPMEVEYVSGAADEDIVSRLFRVQNITRLQEGHLMVRHFQYLRWSAYRDTPDSKKSFLHLLAQVERWQKESGDGRTVVHCLNGGGRSGTYCASTMILEMIKCHNMADIFYAAKTLRNYKPNMVETLEQYHFCYDIALEYLESLETR</sequence>
<feature type="signal peptide" evidence="2">
    <location>
        <begin position="1"/>
        <end position="17"/>
    </location>
</feature>
<feature type="chain" id="PRO_0000371660" description="Receptor-type tyrosine-protein phosphatase U">
    <location>
        <begin position="18"/>
        <end position="1434"/>
    </location>
</feature>
<feature type="topological domain" description="Extracellular" evidence="2">
    <location>
        <begin position="18"/>
        <end position="748"/>
    </location>
</feature>
<feature type="transmembrane region" description="Helical" evidence="2">
    <location>
        <begin position="749"/>
        <end position="769"/>
    </location>
</feature>
<feature type="topological domain" description="Cytoplasmic" evidence="2">
    <location>
        <begin position="770"/>
        <end position="1434"/>
    </location>
</feature>
<feature type="domain" description="MAM" evidence="4">
    <location>
        <begin position="25"/>
        <end position="187"/>
    </location>
</feature>
<feature type="domain" description="Ig-like C2-type">
    <location>
        <begin position="189"/>
        <end position="274"/>
    </location>
</feature>
<feature type="domain" description="Fibronectin type-III 1" evidence="6">
    <location>
        <begin position="287"/>
        <end position="382"/>
    </location>
</feature>
<feature type="domain" description="Fibronectin type-III 2" evidence="6">
    <location>
        <begin position="385"/>
        <end position="483"/>
    </location>
</feature>
<feature type="domain" description="Fibronectin type-III 3" evidence="6">
    <location>
        <begin position="484"/>
        <end position="590"/>
    </location>
</feature>
<feature type="domain" description="Fibronectin type-III 4" evidence="6">
    <location>
        <begin position="597"/>
        <end position="677"/>
    </location>
</feature>
<feature type="domain" description="Tyrosine-protein phosphatase 1" evidence="5">
    <location>
        <begin position="876"/>
        <end position="1132"/>
    </location>
</feature>
<feature type="domain" description="Tyrosine-protein phosphatase 2" evidence="5">
    <location>
        <begin position="1164"/>
        <end position="1427"/>
    </location>
</feature>
<feature type="region of interest" description="Disordered" evidence="8">
    <location>
        <begin position="824"/>
        <end position="851"/>
    </location>
</feature>
<feature type="compositionally biased region" description="Polar residues" evidence="8">
    <location>
        <begin position="824"/>
        <end position="839"/>
    </location>
</feature>
<feature type="active site" description="Phosphocysteine intermediate" evidence="1">
    <location>
        <position position="1073"/>
    </location>
</feature>
<feature type="active site" description="Phosphocysteine intermediate" evidence="1">
    <location>
        <position position="1368"/>
    </location>
</feature>
<feature type="binding site" evidence="2">
    <location>
        <position position="1041"/>
    </location>
    <ligand>
        <name>substrate</name>
    </ligand>
</feature>
<feature type="binding site" evidence="1">
    <location>
        <begin position="1073"/>
        <end position="1079"/>
    </location>
    <ligand>
        <name>substrate</name>
    </ligand>
</feature>
<feature type="binding site" evidence="1">
    <location>
        <position position="1117"/>
    </location>
    <ligand>
        <name>substrate</name>
    </ligand>
</feature>
<feature type="glycosylation site" description="N-linked (GlcNAc...) asparagine" evidence="2">
    <location>
        <position position="74"/>
    </location>
</feature>
<feature type="glycosylation site" description="N-linked (GlcNAc...) asparagine" evidence="2">
    <location>
        <position position="409"/>
    </location>
</feature>
<feature type="glycosylation site" description="N-linked (GlcNAc...) asparagine" evidence="2">
    <location>
        <position position="684"/>
    </location>
</feature>
<feature type="disulfide bond" evidence="3">
    <location>
        <begin position="209"/>
        <end position="263"/>
    </location>
</feature>
<feature type="sequence conflict" description="In Ref. 2; AAA49016." evidence="10" ref="2">
    <original>I</original>
    <variation>M</variation>
    <location>
        <position position="932"/>
    </location>
</feature>
<name>PTPRU_CHICK</name>
<reference key="1">
    <citation type="journal article" date="2003" name="Gene Expr. Patterns">
        <title>Chick receptor tyrosine phosphatase psi is dynamically expressed during somitogenesis.</title>
        <authorList>
            <person name="Aerne B."/>
            <person name="Stoker A."/>
            <person name="Ish-Horowicz D."/>
        </authorList>
    </citation>
    <scope>NUCLEOTIDE SEQUENCE [MRNA]</scope>
    <scope>DEVELOPMENTAL STAGE</scope>
</reference>
<reference key="2">
    <citation type="submission" date="1993-07" db="EMBL/GenBank/DDBJ databases">
        <title>Protein tyrosine phosphatases isolated from embryonic chicken lens epithelium.</title>
        <authorList>
            <person name="Potts J.D."/>
        </authorList>
    </citation>
    <scope>NUCLEOTIDE SEQUENCE [MRNA] OF 929-986</scope>
    <source>
        <tissue>Lens</tissue>
    </source>
</reference>
<keyword id="KW-0130">Cell adhesion</keyword>
<keyword id="KW-0965">Cell junction</keyword>
<keyword id="KW-1003">Cell membrane</keyword>
<keyword id="KW-0221">Differentiation</keyword>
<keyword id="KW-1015">Disulfide bond</keyword>
<keyword id="KW-0325">Glycoprotein</keyword>
<keyword id="KW-0378">Hydrolase</keyword>
<keyword id="KW-0393">Immunoglobulin domain</keyword>
<keyword id="KW-0472">Membrane</keyword>
<keyword id="KW-0904">Protein phosphatase</keyword>
<keyword id="KW-0675">Receptor</keyword>
<keyword id="KW-1185">Reference proteome</keyword>
<keyword id="KW-0677">Repeat</keyword>
<keyword id="KW-0732">Signal</keyword>
<keyword id="KW-0812">Transmembrane</keyword>
<keyword id="KW-1133">Transmembrane helix</keyword>
<dbReference type="EC" id="3.1.3.48"/>
<dbReference type="EMBL" id="AY147868">
    <property type="protein sequence ID" value="AAN38300.1"/>
    <property type="molecule type" value="mRNA"/>
</dbReference>
<dbReference type="EMBL" id="L20504">
    <property type="protein sequence ID" value="AAA49016.1"/>
    <property type="status" value="ALT_SEQ"/>
    <property type="molecule type" value="mRNA"/>
</dbReference>
<dbReference type="RefSeq" id="NP_989823.1">
    <property type="nucleotide sequence ID" value="NM_204492.2"/>
</dbReference>
<dbReference type="SMR" id="Q6YI48"/>
<dbReference type="FunCoup" id="Q6YI48">
    <property type="interactions" value="53"/>
</dbReference>
<dbReference type="STRING" id="9031.ENSGALP00000071559"/>
<dbReference type="GlyCosmos" id="Q6YI48">
    <property type="glycosylation" value="3 sites, No reported glycans"/>
</dbReference>
<dbReference type="GlyGen" id="Q6YI48">
    <property type="glycosylation" value="3 sites"/>
</dbReference>
<dbReference type="PaxDb" id="9031-ENSGALP00000002193"/>
<dbReference type="GeneID" id="395153"/>
<dbReference type="KEGG" id="gga:395153"/>
<dbReference type="CTD" id="10076"/>
<dbReference type="VEuPathDB" id="HostDB:geneid_395153"/>
<dbReference type="eggNOG" id="KOG4228">
    <property type="taxonomic scope" value="Eukaryota"/>
</dbReference>
<dbReference type="InParanoid" id="Q6YI48"/>
<dbReference type="OrthoDB" id="10253954at2759"/>
<dbReference type="PhylomeDB" id="Q6YI48"/>
<dbReference type="PRO" id="PR:Q6YI48"/>
<dbReference type="Proteomes" id="UP000000539">
    <property type="component" value="Unassembled WGS sequence"/>
</dbReference>
<dbReference type="GO" id="GO:0070161">
    <property type="term" value="C:anchoring junction"/>
    <property type="evidence" value="ECO:0007669"/>
    <property type="project" value="UniProtKB-SubCell"/>
</dbReference>
<dbReference type="GO" id="GO:0005886">
    <property type="term" value="C:plasma membrane"/>
    <property type="evidence" value="ECO:0007669"/>
    <property type="project" value="UniProtKB-SubCell"/>
</dbReference>
<dbReference type="GO" id="GO:0004725">
    <property type="term" value="F:protein tyrosine phosphatase activity"/>
    <property type="evidence" value="ECO:0007669"/>
    <property type="project" value="UniProtKB-EC"/>
</dbReference>
<dbReference type="GO" id="GO:0007155">
    <property type="term" value="P:cell adhesion"/>
    <property type="evidence" value="ECO:0007669"/>
    <property type="project" value="UniProtKB-KW"/>
</dbReference>
<dbReference type="GO" id="GO:0030154">
    <property type="term" value="P:cell differentiation"/>
    <property type="evidence" value="ECO:0007669"/>
    <property type="project" value="UniProtKB-KW"/>
</dbReference>
<dbReference type="CDD" id="cd00063">
    <property type="entry name" value="FN3"/>
    <property type="match status" value="3"/>
</dbReference>
<dbReference type="CDD" id="cd06263">
    <property type="entry name" value="MAM"/>
    <property type="match status" value="1"/>
</dbReference>
<dbReference type="CDD" id="cd14632">
    <property type="entry name" value="R-PTPc-U-1"/>
    <property type="match status" value="1"/>
</dbReference>
<dbReference type="CDD" id="cd14637">
    <property type="entry name" value="R-PTPc-U-2"/>
    <property type="match status" value="1"/>
</dbReference>
<dbReference type="FunFam" id="2.60.40.10:FF:000019">
    <property type="entry name" value="receptor-type tyrosine-protein phosphatase kappa isoform X2"/>
    <property type="match status" value="1"/>
</dbReference>
<dbReference type="FunFam" id="2.60.40.10:FF:000009">
    <property type="entry name" value="receptor-type tyrosine-protein phosphatase U isoform X1"/>
    <property type="match status" value="1"/>
</dbReference>
<dbReference type="FunFam" id="2.60.40.10:FF:000048">
    <property type="entry name" value="receptor-type tyrosine-protein phosphatase U isoform X1"/>
    <property type="match status" value="1"/>
</dbReference>
<dbReference type="FunFam" id="3.90.190.10:FF:000019">
    <property type="entry name" value="receptor-type tyrosine-protein phosphatase U isoform X1"/>
    <property type="match status" value="1"/>
</dbReference>
<dbReference type="FunFam" id="2.60.120.200:FF:000022">
    <property type="entry name" value="receptor-type tyrosine-protein phosphatase U isoform X2"/>
    <property type="match status" value="1"/>
</dbReference>
<dbReference type="FunFam" id="2.60.40.10:FF:000025">
    <property type="entry name" value="receptor-type tyrosine-protein phosphatase U isoform X2"/>
    <property type="match status" value="1"/>
</dbReference>
<dbReference type="FunFam" id="3.90.190.10:FF:000014">
    <property type="entry name" value="receptor-type tyrosine-protein phosphatase U isoform X2"/>
    <property type="match status" value="1"/>
</dbReference>
<dbReference type="Gene3D" id="2.60.120.200">
    <property type="match status" value="1"/>
</dbReference>
<dbReference type="Gene3D" id="2.60.40.10">
    <property type="entry name" value="Immunoglobulins"/>
    <property type="match status" value="4"/>
</dbReference>
<dbReference type="Gene3D" id="3.90.190.10">
    <property type="entry name" value="Protein tyrosine phosphatase superfamily"/>
    <property type="match status" value="2"/>
</dbReference>
<dbReference type="InterPro" id="IPR013320">
    <property type="entry name" value="ConA-like_dom_sf"/>
</dbReference>
<dbReference type="InterPro" id="IPR003961">
    <property type="entry name" value="FN3_dom"/>
</dbReference>
<dbReference type="InterPro" id="IPR036116">
    <property type="entry name" value="FN3_sf"/>
</dbReference>
<dbReference type="InterPro" id="IPR007110">
    <property type="entry name" value="Ig-like_dom"/>
</dbReference>
<dbReference type="InterPro" id="IPR036179">
    <property type="entry name" value="Ig-like_dom_sf"/>
</dbReference>
<dbReference type="InterPro" id="IPR013783">
    <property type="entry name" value="Ig-like_fold"/>
</dbReference>
<dbReference type="InterPro" id="IPR003599">
    <property type="entry name" value="Ig_sub"/>
</dbReference>
<dbReference type="InterPro" id="IPR000998">
    <property type="entry name" value="MAM_dom"/>
</dbReference>
<dbReference type="InterPro" id="IPR029021">
    <property type="entry name" value="Prot-tyrosine_phosphatase-like"/>
</dbReference>
<dbReference type="InterPro" id="IPR000242">
    <property type="entry name" value="PTP_cat"/>
</dbReference>
<dbReference type="InterPro" id="IPR051622">
    <property type="entry name" value="R-tyr_protein_phosphatases"/>
</dbReference>
<dbReference type="InterPro" id="IPR016130">
    <property type="entry name" value="Tyr_Pase_AS"/>
</dbReference>
<dbReference type="InterPro" id="IPR003595">
    <property type="entry name" value="Tyr_Pase_cat"/>
</dbReference>
<dbReference type="InterPro" id="IPR000387">
    <property type="entry name" value="Tyr_Pase_dom"/>
</dbReference>
<dbReference type="PANTHER" id="PTHR24051:SF10">
    <property type="entry name" value="RECEPTOR-TYPE TYROSINE-PROTEIN PHOSPHATASE U-RELATED"/>
    <property type="match status" value="1"/>
</dbReference>
<dbReference type="PANTHER" id="PTHR24051">
    <property type="entry name" value="SUSHI DOMAIN-CONTAINING PROTEIN 1"/>
    <property type="match status" value="1"/>
</dbReference>
<dbReference type="Pfam" id="PF00041">
    <property type="entry name" value="fn3"/>
    <property type="match status" value="1"/>
</dbReference>
<dbReference type="Pfam" id="PF23144">
    <property type="entry name" value="Fn3_PTPRU"/>
    <property type="match status" value="1"/>
</dbReference>
<dbReference type="Pfam" id="PF00629">
    <property type="entry name" value="MAM"/>
    <property type="match status" value="1"/>
</dbReference>
<dbReference type="Pfam" id="PF00102">
    <property type="entry name" value="Y_phosphatase"/>
    <property type="match status" value="2"/>
</dbReference>
<dbReference type="PRINTS" id="PR00020">
    <property type="entry name" value="MAMDOMAIN"/>
</dbReference>
<dbReference type="PRINTS" id="PR00700">
    <property type="entry name" value="PRTYPHPHTASE"/>
</dbReference>
<dbReference type="SMART" id="SM00060">
    <property type="entry name" value="FN3"/>
    <property type="match status" value="3"/>
</dbReference>
<dbReference type="SMART" id="SM00409">
    <property type="entry name" value="IG"/>
    <property type="match status" value="1"/>
</dbReference>
<dbReference type="SMART" id="SM00137">
    <property type="entry name" value="MAM"/>
    <property type="match status" value="1"/>
</dbReference>
<dbReference type="SMART" id="SM00194">
    <property type="entry name" value="PTPc"/>
    <property type="match status" value="2"/>
</dbReference>
<dbReference type="SMART" id="SM00404">
    <property type="entry name" value="PTPc_motif"/>
    <property type="match status" value="2"/>
</dbReference>
<dbReference type="SUPFAM" id="SSF52799">
    <property type="entry name" value="(Phosphotyrosine protein) phosphatases II"/>
    <property type="match status" value="2"/>
</dbReference>
<dbReference type="SUPFAM" id="SSF49899">
    <property type="entry name" value="Concanavalin A-like lectins/glucanases"/>
    <property type="match status" value="1"/>
</dbReference>
<dbReference type="SUPFAM" id="SSF49265">
    <property type="entry name" value="Fibronectin type III"/>
    <property type="match status" value="2"/>
</dbReference>
<dbReference type="SUPFAM" id="SSF48726">
    <property type="entry name" value="Immunoglobulin"/>
    <property type="match status" value="1"/>
</dbReference>
<dbReference type="PROSITE" id="PS50853">
    <property type="entry name" value="FN3"/>
    <property type="match status" value="3"/>
</dbReference>
<dbReference type="PROSITE" id="PS50835">
    <property type="entry name" value="IG_LIKE"/>
    <property type="match status" value="1"/>
</dbReference>
<dbReference type="PROSITE" id="PS00740">
    <property type="entry name" value="MAM_1"/>
    <property type="match status" value="1"/>
</dbReference>
<dbReference type="PROSITE" id="PS50060">
    <property type="entry name" value="MAM_2"/>
    <property type="match status" value="1"/>
</dbReference>
<dbReference type="PROSITE" id="PS00383">
    <property type="entry name" value="TYR_PHOSPHATASE_1"/>
    <property type="match status" value="2"/>
</dbReference>
<dbReference type="PROSITE" id="PS50056">
    <property type="entry name" value="TYR_PHOSPHATASE_2"/>
    <property type="match status" value="2"/>
</dbReference>
<dbReference type="PROSITE" id="PS50055">
    <property type="entry name" value="TYR_PHOSPHATASE_PTP"/>
    <property type="match status" value="2"/>
</dbReference>
<proteinExistence type="evidence at transcript level"/>